<comment type="function">
    <text evidence="1">Sequential reduction of tetrachloro-p-hydroquinone to monochlorophenol, using glutathione as the reducing agent.</text>
</comment>
<comment type="catalytic activity">
    <reaction evidence="2 3">
        <text>2,6-dichlorohydroquinone + glutathione disulfide + chloride + H(+) = 2,3,6-trichlorohydroquinone + 2 glutathione</text>
        <dbReference type="Rhea" id="RHEA:56832"/>
        <dbReference type="ChEBI" id="CHEBI:15378"/>
        <dbReference type="ChEBI" id="CHEBI:17996"/>
        <dbReference type="ChEBI" id="CHEBI:57925"/>
        <dbReference type="ChEBI" id="CHEBI:58297"/>
        <dbReference type="ChEBI" id="CHEBI:141023"/>
        <dbReference type="ChEBI" id="CHEBI:141024"/>
        <dbReference type="EC" id="1.21.4.5"/>
    </reaction>
</comment>
<comment type="catalytic activity">
    <reaction evidence="2 3">
        <text>2,3,6-trichlorohydroquinone + glutathione disulfide + chloride = 2,3,5,6-tetrachlorohydroquinone + 2 glutathione</text>
        <dbReference type="Rhea" id="RHEA:56828"/>
        <dbReference type="ChEBI" id="CHEBI:17996"/>
        <dbReference type="ChEBI" id="CHEBI:57925"/>
        <dbReference type="ChEBI" id="CHEBI:57994"/>
        <dbReference type="ChEBI" id="CHEBI:58297"/>
        <dbReference type="ChEBI" id="CHEBI:141023"/>
        <dbReference type="EC" id="1.21.4.5"/>
    </reaction>
</comment>
<comment type="biophysicochemical properties">
    <phDependence>
        <text evidence="2">Optimum pH is 6-7.</text>
    </phDependence>
</comment>
<comment type="pathway">
    <text>Xenobiotic degradation; pentachlorophenol degradation.</text>
</comment>
<comment type="subunit">
    <text evidence="2">Homodimer.</text>
</comment>
<comment type="induction">
    <text>Constitutively expressed.</text>
</comment>
<comment type="similarity">
    <text evidence="4">Belongs to the GST superfamily.</text>
</comment>
<accession>Q03520</accession>
<accession>Q8KN34</accession>
<reference key="1">
    <citation type="journal article" date="1993" name="J. Bacteriol.">
        <title>Characterization of a Flavobacterium glutathione S-transferase gene involved reductive dechlorination.</title>
        <authorList>
            <person name="Orser C.S."/>
            <person name="Dutton J."/>
            <person name="Lange C.C."/>
            <person name="Jablonski P.E."/>
            <person name="Xun L."/>
            <person name="Hargis M."/>
        </authorList>
    </citation>
    <scope>NUCLEOTIDE SEQUENCE [GENOMIC DNA]</scope>
    <source>
        <strain>ATCC 39723 / DSM 6824 / L-1</strain>
    </source>
</reference>
<reference key="2">
    <citation type="journal article" date="2002" name="J. Bacteriol.">
        <title>Organization and regulation of pentachlorophenol-degrading genes in Sphingobium chlorophenolicum ATCC 39723.</title>
        <authorList>
            <person name="Cai M."/>
            <person name="Xun L."/>
        </authorList>
    </citation>
    <scope>SEQUENCE REVISION TO 78-79 AND 180</scope>
    <scope>FUNCTION</scope>
    <source>
        <strain>ATCC 39723 / DSM 6824 / L-1</strain>
    </source>
</reference>
<reference key="3">
    <citation type="journal article" date="1992" name="J. Bacteriol.">
        <title>Purification and characterization of a tetrachloro-p-hydroquinone reductive dehalogenase from a Flavobacterium sp.</title>
        <authorList>
            <person name="Xun L."/>
            <person name="Topp E."/>
            <person name="Orser C.S."/>
        </authorList>
    </citation>
    <scope>PROTEIN SEQUENCE OF 2-19</scope>
    <scope>CATALYTIC ACTIVITY</scope>
    <scope>SUBUNIT</scope>
    <scope>BIOPHYSICOCHEMICAL PROPERTIES</scope>
    <source>
        <strain>ATCC 39723 / DSM 6824 / L-1</strain>
    </source>
</reference>
<reference key="4">
    <citation type="journal article" date="1996" name="Biochemistry">
        <title>Exploration of the relationship between tetrachlorohydroquinone dehalogenase and the glutathione S-transferase superfamily.</title>
        <authorList>
            <person name="McCarthy D.L."/>
            <person name="Navarrete S."/>
            <person name="Willett W.S."/>
            <person name="Babbitt P.C."/>
            <person name="Copley S.D."/>
        </authorList>
    </citation>
    <scope>CATALYTIC ACTIVITY</scope>
    <scope>MUTAGENESIS OF CYS-14 AND CYS-157</scope>
    <scope>REACTION MECHANISM</scope>
    <source>
        <strain>ATCC 39723 / DSM 6824 / L-1</strain>
    </source>
</reference>
<evidence type="ECO:0000269" key="1">
    <source>
    </source>
</evidence>
<evidence type="ECO:0000269" key="2">
    <source>
    </source>
</evidence>
<evidence type="ECO:0000269" key="3">
    <source>
    </source>
</evidence>
<evidence type="ECO:0000305" key="4"/>
<gene>
    <name type="primary">pcpC</name>
</gene>
<dbReference type="EC" id="1.21.4.5" evidence="2 3"/>
<dbReference type="EMBL" id="AF512952">
    <property type="protein sequence ID" value="AAM96673.1"/>
    <property type="molecule type" value="Genomic_DNA"/>
</dbReference>
<dbReference type="SMR" id="Q03520"/>
<dbReference type="eggNOG" id="COG0625">
    <property type="taxonomic scope" value="Bacteria"/>
</dbReference>
<dbReference type="OrthoDB" id="9810080at2"/>
<dbReference type="BioCyc" id="MetaCyc:PCPCFLAVO-MONOMER"/>
<dbReference type="BRENDA" id="1.21.4.5">
    <property type="organism ID" value="7700"/>
</dbReference>
<dbReference type="UniPathway" id="UPA00691"/>
<dbReference type="GO" id="GO:0004364">
    <property type="term" value="F:glutathione transferase activity"/>
    <property type="evidence" value="ECO:0007669"/>
    <property type="project" value="InterPro"/>
</dbReference>
<dbReference type="GO" id="GO:0052690">
    <property type="term" value="F:trichloro-p-hydroquinone reductive dehalogenase activity"/>
    <property type="evidence" value="ECO:0007669"/>
    <property type="project" value="RHEA"/>
</dbReference>
<dbReference type="GO" id="GO:0019338">
    <property type="term" value="P:pentachlorophenol catabolic process"/>
    <property type="evidence" value="ECO:0007669"/>
    <property type="project" value="UniProtKB-UniPathway"/>
</dbReference>
<dbReference type="CDD" id="cd00299">
    <property type="entry name" value="GST_C_family"/>
    <property type="match status" value="1"/>
</dbReference>
<dbReference type="CDD" id="cd00570">
    <property type="entry name" value="GST_N_family"/>
    <property type="match status" value="1"/>
</dbReference>
<dbReference type="Gene3D" id="1.20.1050.10">
    <property type="match status" value="1"/>
</dbReference>
<dbReference type="Gene3D" id="3.40.30.10">
    <property type="entry name" value="Glutaredoxin"/>
    <property type="match status" value="1"/>
</dbReference>
<dbReference type="InterPro" id="IPR010987">
    <property type="entry name" value="Glutathione-S-Trfase_C-like"/>
</dbReference>
<dbReference type="InterPro" id="IPR036282">
    <property type="entry name" value="Glutathione-S-Trfase_C_sf"/>
</dbReference>
<dbReference type="InterPro" id="IPR040079">
    <property type="entry name" value="Glutathione_S-Trfase"/>
</dbReference>
<dbReference type="InterPro" id="IPR004045">
    <property type="entry name" value="Glutathione_S-Trfase_N"/>
</dbReference>
<dbReference type="InterPro" id="IPR044617">
    <property type="entry name" value="TCHQD"/>
</dbReference>
<dbReference type="InterPro" id="IPR036249">
    <property type="entry name" value="Thioredoxin-like_sf"/>
</dbReference>
<dbReference type="PANTHER" id="PTHR45374">
    <property type="entry name" value="GLUTATHIONE S-TRANSFERASE TCHQD"/>
    <property type="match status" value="1"/>
</dbReference>
<dbReference type="PANTHER" id="PTHR45374:SF1">
    <property type="entry name" value="GLUTATHIONE S-TRANSFERASE TCHQD"/>
    <property type="match status" value="1"/>
</dbReference>
<dbReference type="Pfam" id="PF13410">
    <property type="entry name" value="GST_C_2"/>
    <property type="match status" value="1"/>
</dbReference>
<dbReference type="Pfam" id="PF02798">
    <property type="entry name" value="GST_N"/>
    <property type="match status" value="1"/>
</dbReference>
<dbReference type="SFLD" id="SFLDS00019">
    <property type="entry name" value="Glutathione_Transferase_(cytos"/>
    <property type="match status" value="1"/>
</dbReference>
<dbReference type="SUPFAM" id="SSF47616">
    <property type="entry name" value="GST C-terminal domain-like"/>
    <property type="match status" value="1"/>
</dbReference>
<dbReference type="SUPFAM" id="SSF52833">
    <property type="entry name" value="Thioredoxin-like"/>
    <property type="match status" value="1"/>
</dbReference>
<dbReference type="PROSITE" id="PS50405">
    <property type="entry name" value="GST_CTER"/>
    <property type="match status" value="1"/>
</dbReference>
<dbReference type="PROSITE" id="PS50404">
    <property type="entry name" value="GST_NTER"/>
    <property type="match status" value="1"/>
</dbReference>
<keyword id="KW-0058">Aromatic hydrocarbons catabolism</keyword>
<keyword id="KW-0903">Direct protein sequencing</keyword>
<keyword id="KW-0560">Oxidoreductase</keyword>
<feature type="initiator methionine" description="Removed" evidence="2">
    <location>
        <position position="1"/>
    </location>
</feature>
<feature type="chain" id="PRO_0000185991" description="Tetrachloro-P-hydroquinone reductive dehalogenase">
    <location>
        <begin position="2"/>
        <end position="248"/>
    </location>
</feature>
<feature type="domain" description="GST N-terminal">
    <location>
        <begin position="2"/>
        <end position="84"/>
    </location>
</feature>
<feature type="domain" description="GST C-terminal">
    <location>
        <begin position="133"/>
        <end position="248"/>
    </location>
</feature>
<feature type="mutagenesis site" description="Produces 2,3,5-trichloro-6-S-glutathionylhydroquinone and dichloro-S-glutathionylhydroquinone, but no 2,6-dichlorohydroquinone." evidence="3">
    <original>C</original>
    <variation>S</variation>
    <location>
        <position position="14"/>
    </location>
</feature>
<feature type="mutagenesis site" description="No effect." evidence="3">
    <original>C</original>
    <variation>S</variation>
    <location>
        <position position="157"/>
    </location>
</feature>
<protein>
    <recommendedName>
        <fullName>Tetrachloro-P-hydroquinone reductive dehalogenase</fullName>
        <ecNumber evidence="2 3">1.21.4.5</ecNumber>
    </recommendedName>
</protein>
<organism>
    <name type="scientific">Sphingobium chlorophenolicum</name>
    <dbReference type="NCBI Taxonomy" id="46429"/>
    <lineage>
        <taxon>Bacteria</taxon>
        <taxon>Pseudomonadati</taxon>
        <taxon>Pseudomonadota</taxon>
        <taxon>Alphaproteobacteria</taxon>
        <taxon>Sphingomonadales</taxon>
        <taxon>Sphingomonadaceae</taxon>
        <taxon>Sphingobium</taxon>
    </lineage>
</organism>
<proteinExistence type="evidence at protein level"/>
<sequence length="248" mass="28246">MPEVSLYNYTMSICSMKTRLAMEEFGVDYDDKQVDIGFALENFEPDYVRLNEKAVVPTLVVGDRVVTNSYNIVLEAAKLGKVGIPADPVENKAALDWFQKGDQVNFQVITYGHKGVPRGDELLIARRERAKEYAEKYPELRSIYQAAHDRIVEHGNCAYDADTVAQAEVDLQKRLDELDAHLADKPFIAGSNYSIADIMWTVLLARIEMLNMTAWISERPNLLAYYQRMKARRSFETARVMPNWKGGI</sequence>
<name>PCPC_SPHCR</name>